<dbReference type="EC" id="2.3.2.13"/>
<dbReference type="EMBL" id="D12593">
    <property type="protein sequence ID" value="BAA02134.1"/>
    <property type="molecule type" value="mRNA"/>
</dbReference>
<dbReference type="PIR" id="A45321">
    <property type="entry name" value="A45321"/>
</dbReference>
<dbReference type="SMR" id="Q05187"/>
<dbReference type="GO" id="GO:0016020">
    <property type="term" value="C:membrane"/>
    <property type="evidence" value="ECO:0007669"/>
    <property type="project" value="UniProtKB-SubCell"/>
</dbReference>
<dbReference type="GO" id="GO:0046872">
    <property type="term" value="F:metal ion binding"/>
    <property type="evidence" value="ECO:0007669"/>
    <property type="project" value="UniProtKB-KW"/>
</dbReference>
<dbReference type="GO" id="GO:0003810">
    <property type="term" value="F:protein-glutamine gamma-glutamyltransferase activity"/>
    <property type="evidence" value="ECO:0007669"/>
    <property type="project" value="UniProtKB-EC"/>
</dbReference>
<dbReference type="FunFam" id="2.60.40.10:FF:000090">
    <property type="entry name" value="Protein-glutamine gamma-glutamyltransferase 2"/>
    <property type="match status" value="1"/>
</dbReference>
<dbReference type="FunFam" id="3.90.260.10:FF:000001">
    <property type="entry name" value="Protein-glutamine gamma-glutamyltransferase 2"/>
    <property type="match status" value="1"/>
</dbReference>
<dbReference type="FunFam" id="2.60.40.10:FF:000171">
    <property type="entry name" value="protein-glutamine gamma-glutamyltransferase 6"/>
    <property type="match status" value="1"/>
</dbReference>
<dbReference type="Gene3D" id="2.60.40.10">
    <property type="entry name" value="Immunoglobulins"/>
    <property type="match status" value="3"/>
</dbReference>
<dbReference type="Gene3D" id="3.90.260.10">
    <property type="entry name" value="Transglutaminase-like"/>
    <property type="match status" value="1"/>
</dbReference>
<dbReference type="InterPro" id="IPR013783">
    <property type="entry name" value="Ig-like_fold"/>
</dbReference>
<dbReference type="InterPro" id="IPR014756">
    <property type="entry name" value="Ig_E-set"/>
</dbReference>
<dbReference type="InterPro" id="IPR038765">
    <property type="entry name" value="Papain-like_cys_pep_sf"/>
</dbReference>
<dbReference type="InterPro" id="IPR050779">
    <property type="entry name" value="Transglutaminase"/>
</dbReference>
<dbReference type="InterPro" id="IPR002931">
    <property type="entry name" value="Transglutaminase-like"/>
</dbReference>
<dbReference type="InterPro" id="IPR036985">
    <property type="entry name" value="Transglutaminase-like_sf"/>
</dbReference>
<dbReference type="InterPro" id="IPR023608">
    <property type="entry name" value="Transglutaminase_animal"/>
</dbReference>
<dbReference type="InterPro" id="IPR013808">
    <property type="entry name" value="Transglutaminase_AS"/>
</dbReference>
<dbReference type="InterPro" id="IPR008958">
    <property type="entry name" value="Transglutaminase_C"/>
</dbReference>
<dbReference type="InterPro" id="IPR036238">
    <property type="entry name" value="Transglutaminase_C_sf"/>
</dbReference>
<dbReference type="InterPro" id="IPR001102">
    <property type="entry name" value="Transglutaminase_N"/>
</dbReference>
<dbReference type="PANTHER" id="PTHR11590:SF40">
    <property type="entry name" value="HEMOCYTE PROTEIN-GLUTAMINE GAMMA-GLUTAMYLTRANSFERASE-LIKE PROTEIN"/>
    <property type="match status" value="1"/>
</dbReference>
<dbReference type="PANTHER" id="PTHR11590">
    <property type="entry name" value="PROTEIN-GLUTAMINE GAMMA-GLUTAMYLTRANSFERASE"/>
    <property type="match status" value="1"/>
</dbReference>
<dbReference type="Pfam" id="PF00927">
    <property type="entry name" value="Transglut_C"/>
    <property type="match status" value="2"/>
</dbReference>
<dbReference type="Pfam" id="PF01841">
    <property type="entry name" value="Transglut_core"/>
    <property type="match status" value="1"/>
</dbReference>
<dbReference type="Pfam" id="PF00868">
    <property type="entry name" value="Transglut_N"/>
    <property type="match status" value="1"/>
</dbReference>
<dbReference type="PIRSF" id="PIRSF000459">
    <property type="entry name" value="TGM_EBP42"/>
    <property type="match status" value="1"/>
</dbReference>
<dbReference type="SMART" id="SM00460">
    <property type="entry name" value="TGc"/>
    <property type="match status" value="1"/>
</dbReference>
<dbReference type="SUPFAM" id="SSF54001">
    <property type="entry name" value="Cysteine proteinases"/>
    <property type="match status" value="1"/>
</dbReference>
<dbReference type="SUPFAM" id="SSF81296">
    <property type="entry name" value="E set domains"/>
    <property type="match status" value="1"/>
</dbReference>
<dbReference type="SUPFAM" id="SSF49309">
    <property type="entry name" value="Transglutaminase, two C-terminal domains"/>
    <property type="match status" value="2"/>
</dbReference>
<dbReference type="PROSITE" id="PS00547">
    <property type="entry name" value="TRANSGLUTAMINASES"/>
    <property type="match status" value="1"/>
</dbReference>
<comment type="function">
    <text>Catalyzes the cross-linking of proteins and the conjugation of polyamines to proteins.</text>
</comment>
<comment type="catalytic activity">
    <reaction evidence="2">
        <text>L-glutaminyl-[protein] + L-lysyl-[protein] = [protein]-L-lysyl-N(6)-5-L-glutamyl-[protein] + NH4(+)</text>
        <dbReference type="Rhea" id="RHEA:54816"/>
        <dbReference type="Rhea" id="RHEA-COMP:9752"/>
        <dbReference type="Rhea" id="RHEA-COMP:10207"/>
        <dbReference type="Rhea" id="RHEA-COMP:14005"/>
        <dbReference type="ChEBI" id="CHEBI:28938"/>
        <dbReference type="ChEBI" id="CHEBI:29969"/>
        <dbReference type="ChEBI" id="CHEBI:30011"/>
        <dbReference type="ChEBI" id="CHEBI:138370"/>
        <dbReference type="EC" id="2.3.2.13"/>
    </reaction>
</comment>
<comment type="cofactor">
    <cofactor evidence="1">
        <name>Ca(2+)</name>
        <dbReference type="ChEBI" id="CHEBI:29108"/>
    </cofactor>
    <text evidence="1">Binds 1 Ca(2+) ion per subunit.</text>
</comment>
<comment type="subcellular location">
    <subcellularLocation>
        <location>Membrane</location>
        <topology>Peripheral membrane protein</topology>
    </subcellularLocation>
</comment>
<comment type="tissue specificity">
    <text>Mainly expressed in hemocytes, hepatopancreas, and gastric tissues. On the other hand nothing was detected in the heart, intestine and muscle.</text>
</comment>
<comment type="similarity">
    <text evidence="3">Belongs to the transglutaminase superfamily. Transglutaminase family.</text>
</comment>
<sequence>MYGFGRGNMFRNRSTRYRRRPRYRAENYHSYMLDLLENMNEEFGRNWWGTPESHQPDSGPSSLQVESVELYTRDNAREHNTFMYDLVDGTKPVLILRRGQPFSIAIRFKRNYNPQQDRLKLEIGFGQQPLITKGTLIMLPVSGSDTFTKDKTQWDVRLRQHDGAVITLEIQIPAAVAVGVWKMKIVSQLTSEEQPNVSAVTHECKNKTYILFNPWCKQDSVYMEDEQWRKEYVLSDVGKIFTGSFKQPVGRRWIFGQFTDSVLPACMLILERSGLDYTARSNPIKVVRAISAMVNNIDDEGVLEGRWQEPYDDGVAPWMWTGSSAILEKYLKTRGVPVKYGQCWVFAGVANTVSRALGIPSRTVTNYDSAHDTDDTLTIDKWFDKNGDKIEDATSDSIWNFHVWNDCWMARPDLPTGYGGWQAYDSTPQETSEGVYQTGPASVLAVQRGEIGYMFDSPFVFSEVNADVVHWQEDDSSETGYKKLKIDSYRVGRLLLTKKIGVDDDFGDADAEDITDQYKNKEGTDEERMSVLNAARSSGFNYAFNLPSPEKEDVYFNLLDIEKIKIGQPFHVTVNIENQSSETRRVSAVLSASSIYYTGITGRKIKRENGNFSLQPHQKEVLSIEVTPDEYLEKLVDYAMIKLYAIATVKETQQTWSEEDDFMVEKPNLELEIRGNLQVGTAFVLAISLTNPLKRVLDNCFFTIEAPGVTGAFRVTNRDIQPEEVAVHTVRLIPQKPGPRKIVATFSSRQLIQVVGSKQVEVLD</sequence>
<evidence type="ECO:0000250" key="1"/>
<evidence type="ECO:0000255" key="2">
    <source>
        <dbReference type="PROSITE-ProRule" id="PRU10024"/>
    </source>
</evidence>
<evidence type="ECO:0000305" key="3"/>
<protein>
    <recommendedName>
        <fullName>Hemocyte protein-glutamine gamma-glutamyltransferase</fullName>
        <ecNumber>2.3.2.13</ecNumber>
    </recommendedName>
    <alternativeName>
        <fullName>Hemocyte transglutaminase</fullName>
        <shortName>TGase</shortName>
    </alternativeName>
</protein>
<name>TGMH_TACTR</name>
<accession>Q05187</accession>
<keyword id="KW-0012">Acyltransferase</keyword>
<keyword id="KW-0106">Calcium</keyword>
<keyword id="KW-0903">Direct protein sequencing</keyword>
<keyword id="KW-0472">Membrane</keyword>
<keyword id="KW-0479">Metal-binding</keyword>
<keyword id="KW-0808">Transferase</keyword>
<organism>
    <name type="scientific">Tachypleus tridentatus</name>
    <name type="common">Japanese horseshoe crab</name>
    <dbReference type="NCBI Taxonomy" id="6853"/>
    <lineage>
        <taxon>Eukaryota</taxon>
        <taxon>Metazoa</taxon>
        <taxon>Ecdysozoa</taxon>
        <taxon>Arthropoda</taxon>
        <taxon>Chelicerata</taxon>
        <taxon>Merostomata</taxon>
        <taxon>Xiphosura</taxon>
        <taxon>Limulidae</taxon>
        <taxon>Tachypleus</taxon>
    </lineage>
</organism>
<reference key="1">
    <citation type="journal article" date="1993" name="J. Biol. Chem.">
        <title>Limulus hemocyte transglutaminase. cDNA cloning, amino acid sequence, and tissue localization.</title>
        <authorList>
            <person name="Tokunaga F."/>
            <person name="Muta T."/>
            <person name="Iwanaga S."/>
            <person name="Ichinose A."/>
            <person name="Davie E.W."/>
            <person name="Kuma K."/>
            <person name="Miyata T."/>
        </authorList>
    </citation>
    <scope>NUCLEOTIDE SEQUENCE [MRNA]</scope>
    <scope>PARTIAL PROTEIN SEQUENCE</scope>
    <source>
        <tissue>Hemocyte</tissue>
    </source>
</reference>
<feature type="chain" id="PRO_0000213717" description="Hemocyte protein-glutamine gamma-glutamyltransferase">
    <location>
        <begin position="1"/>
        <end position="764"/>
    </location>
</feature>
<feature type="active site" evidence="2">
    <location>
        <position position="343"/>
    </location>
</feature>
<feature type="active site" evidence="2">
    <location>
        <position position="402"/>
    </location>
</feature>
<feature type="active site" evidence="2">
    <location>
        <position position="425"/>
    </location>
</feature>
<feature type="binding site" evidence="1">
    <location>
        <position position="465"/>
    </location>
    <ligand>
        <name>Ca(2+)</name>
        <dbReference type="ChEBI" id="CHEBI:29108"/>
    </ligand>
</feature>
<feature type="binding site" evidence="1">
    <location>
        <position position="467"/>
    </location>
    <ligand>
        <name>Ca(2+)</name>
        <dbReference type="ChEBI" id="CHEBI:29108"/>
    </ligand>
</feature>
<feature type="binding site" evidence="1">
    <location>
        <position position="522"/>
    </location>
    <ligand>
        <name>Ca(2+)</name>
        <dbReference type="ChEBI" id="CHEBI:29108"/>
    </ligand>
</feature>
<feature type="binding site" evidence="1">
    <location>
        <position position="527"/>
    </location>
    <ligand>
        <name>Ca(2+)</name>
        <dbReference type="ChEBI" id="CHEBI:29108"/>
    </ligand>
</feature>
<feature type="sequence variant">
    <original>G</original>
    <variation>R</variation>
    <location>
        <position position="452"/>
    </location>
</feature>
<feature type="sequence variant">
    <original>S</original>
    <variation>C</variation>
    <location>
        <position position="477"/>
    </location>
</feature>
<feature type="sequence variant">
    <original>I</original>
    <variation>S</variation>
    <location>
        <position position="486"/>
    </location>
</feature>
<proteinExistence type="evidence at protein level"/>